<proteinExistence type="evidence at protein level"/>
<accession>Q61967</accession>
<accession>Q3U4J5</accession>
<accession>Q543I6</accession>
<reference key="1">
    <citation type="journal article" date="1995" name="DNA Cell Biol.">
        <title>Developmentally regulated mouse gene NK10 encodes a zinc finger repressor protein with differential DNA-binding domains.</title>
        <authorList>
            <person name="Lange R."/>
            <person name="Christoph A."/>
            <person name="Thiesen H.-J."/>
            <person name="Vopper G."/>
            <person name="Johnson K.R."/>
            <person name="Lemaire L."/>
            <person name="Plomann M."/>
            <person name="Cremer H."/>
            <person name="Barthels D."/>
            <person name="Heinlein U.A.O."/>
        </authorList>
    </citation>
    <scope>NUCLEOTIDE SEQUENCE [MRNA]</scope>
    <scope>FUNCTION</scope>
    <scope>SUBCELLULAR LOCATION</scope>
    <scope>TISSUE SPECIFICITY</scope>
    <scope>DEVELOPMENTAL STAGE</scope>
    <source>
        <strain>C57BL/6J</strain>
        <tissue>Brain</tissue>
    </source>
</reference>
<reference key="2">
    <citation type="journal article" date="2005" name="Science">
        <title>The transcriptional landscape of the mammalian genome.</title>
        <authorList>
            <person name="Carninci P."/>
            <person name="Kasukawa T."/>
            <person name="Katayama S."/>
            <person name="Gough J."/>
            <person name="Frith M.C."/>
            <person name="Maeda N."/>
            <person name="Oyama R."/>
            <person name="Ravasi T."/>
            <person name="Lenhard B."/>
            <person name="Wells C."/>
            <person name="Kodzius R."/>
            <person name="Shimokawa K."/>
            <person name="Bajic V.B."/>
            <person name="Brenner S.E."/>
            <person name="Batalov S."/>
            <person name="Forrest A.R."/>
            <person name="Zavolan M."/>
            <person name="Davis M.J."/>
            <person name="Wilming L.G."/>
            <person name="Aidinis V."/>
            <person name="Allen J.E."/>
            <person name="Ambesi-Impiombato A."/>
            <person name="Apweiler R."/>
            <person name="Aturaliya R.N."/>
            <person name="Bailey T.L."/>
            <person name="Bansal M."/>
            <person name="Baxter L."/>
            <person name="Beisel K.W."/>
            <person name="Bersano T."/>
            <person name="Bono H."/>
            <person name="Chalk A.M."/>
            <person name="Chiu K.P."/>
            <person name="Choudhary V."/>
            <person name="Christoffels A."/>
            <person name="Clutterbuck D.R."/>
            <person name="Crowe M.L."/>
            <person name="Dalla E."/>
            <person name="Dalrymple B.P."/>
            <person name="de Bono B."/>
            <person name="Della Gatta G."/>
            <person name="di Bernardo D."/>
            <person name="Down T."/>
            <person name="Engstrom P."/>
            <person name="Fagiolini M."/>
            <person name="Faulkner G."/>
            <person name="Fletcher C.F."/>
            <person name="Fukushima T."/>
            <person name="Furuno M."/>
            <person name="Futaki S."/>
            <person name="Gariboldi M."/>
            <person name="Georgii-Hemming P."/>
            <person name="Gingeras T.R."/>
            <person name="Gojobori T."/>
            <person name="Green R.E."/>
            <person name="Gustincich S."/>
            <person name="Harbers M."/>
            <person name="Hayashi Y."/>
            <person name="Hensch T.K."/>
            <person name="Hirokawa N."/>
            <person name="Hill D."/>
            <person name="Huminiecki L."/>
            <person name="Iacono M."/>
            <person name="Ikeo K."/>
            <person name="Iwama A."/>
            <person name="Ishikawa T."/>
            <person name="Jakt M."/>
            <person name="Kanapin A."/>
            <person name="Katoh M."/>
            <person name="Kawasawa Y."/>
            <person name="Kelso J."/>
            <person name="Kitamura H."/>
            <person name="Kitano H."/>
            <person name="Kollias G."/>
            <person name="Krishnan S.P."/>
            <person name="Kruger A."/>
            <person name="Kummerfeld S.K."/>
            <person name="Kurochkin I.V."/>
            <person name="Lareau L.F."/>
            <person name="Lazarevic D."/>
            <person name="Lipovich L."/>
            <person name="Liu J."/>
            <person name="Liuni S."/>
            <person name="McWilliam S."/>
            <person name="Madan Babu M."/>
            <person name="Madera M."/>
            <person name="Marchionni L."/>
            <person name="Matsuda H."/>
            <person name="Matsuzawa S."/>
            <person name="Miki H."/>
            <person name="Mignone F."/>
            <person name="Miyake S."/>
            <person name="Morris K."/>
            <person name="Mottagui-Tabar S."/>
            <person name="Mulder N."/>
            <person name="Nakano N."/>
            <person name="Nakauchi H."/>
            <person name="Ng P."/>
            <person name="Nilsson R."/>
            <person name="Nishiguchi S."/>
            <person name="Nishikawa S."/>
            <person name="Nori F."/>
            <person name="Ohara O."/>
            <person name="Okazaki Y."/>
            <person name="Orlando V."/>
            <person name="Pang K.C."/>
            <person name="Pavan W.J."/>
            <person name="Pavesi G."/>
            <person name="Pesole G."/>
            <person name="Petrovsky N."/>
            <person name="Piazza S."/>
            <person name="Reed J."/>
            <person name="Reid J.F."/>
            <person name="Ring B.Z."/>
            <person name="Ringwald M."/>
            <person name="Rost B."/>
            <person name="Ruan Y."/>
            <person name="Salzberg S.L."/>
            <person name="Sandelin A."/>
            <person name="Schneider C."/>
            <person name="Schoenbach C."/>
            <person name="Sekiguchi K."/>
            <person name="Semple C.A."/>
            <person name="Seno S."/>
            <person name="Sessa L."/>
            <person name="Sheng Y."/>
            <person name="Shibata Y."/>
            <person name="Shimada H."/>
            <person name="Shimada K."/>
            <person name="Silva D."/>
            <person name="Sinclair B."/>
            <person name="Sperling S."/>
            <person name="Stupka E."/>
            <person name="Sugiura K."/>
            <person name="Sultana R."/>
            <person name="Takenaka Y."/>
            <person name="Taki K."/>
            <person name="Tammoja K."/>
            <person name="Tan S.L."/>
            <person name="Tang S."/>
            <person name="Taylor M.S."/>
            <person name="Tegner J."/>
            <person name="Teichmann S.A."/>
            <person name="Ueda H.R."/>
            <person name="van Nimwegen E."/>
            <person name="Verardo R."/>
            <person name="Wei C.L."/>
            <person name="Yagi K."/>
            <person name="Yamanishi H."/>
            <person name="Zabarovsky E."/>
            <person name="Zhu S."/>
            <person name="Zimmer A."/>
            <person name="Hide W."/>
            <person name="Bult C."/>
            <person name="Grimmond S.M."/>
            <person name="Teasdale R.D."/>
            <person name="Liu E.T."/>
            <person name="Brusic V."/>
            <person name="Quackenbush J."/>
            <person name="Wahlestedt C."/>
            <person name="Mattick J.S."/>
            <person name="Hume D.A."/>
            <person name="Kai C."/>
            <person name="Sasaki D."/>
            <person name="Tomaru Y."/>
            <person name="Fukuda S."/>
            <person name="Kanamori-Katayama M."/>
            <person name="Suzuki M."/>
            <person name="Aoki J."/>
            <person name="Arakawa T."/>
            <person name="Iida J."/>
            <person name="Imamura K."/>
            <person name="Itoh M."/>
            <person name="Kato T."/>
            <person name="Kawaji H."/>
            <person name="Kawagashira N."/>
            <person name="Kawashima T."/>
            <person name="Kojima M."/>
            <person name="Kondo S."/>
            <person name="Konno H."/>
            <person name="Nakano K."/>
            <person name="Ninomiya N."/>
            <person name="Nishio T."/>
            <person name="Okada M."/>
            <person name="Plessy C."/>
            <person name="Shibata K."/>
            <person name="Shiraki T."/>
            <person name="Suzuki S."/>
            <person name="Tagami M."/>
            <person name="Waki K."/>
            <person name="Watahiki A."/>
            <person name="Okamura-Oho Y."/>
            <person name="Suzuki H."/>
            <person name="Kawai J."/>
            <person name="Hayashizaki Y."/>
        </authorList>
    </citation>
    <scope>NUCLEOTIDE SEQUENCE [LARGE SCALE MRNA]</scope>
    <source>
        <strain>C57BL/6J</strain>
        <strain>NOD</strain>
        <tissue>Dendritic cell</tissue>
        <tissue>Olfactory bulb</tissue>
        <tissue>Pancreatic islet</tissue>
    </source>
</reference>
<reference key="3">
    <citation type="journal article" date="2004" name="Genome Res.">
        <title>The status, quality, and expansion of the NIH full-length cDNA project: the Mammalian Gene Collection (MGC).</title>
        <authorList>
            <consortium name="The MGC Project Team"/>
        </authorList>
    </citation>
    <scope>NUCLEOTIDE SEQUENCE [LARGE SCALE MRNA]</scope>
    <source>
        <strain>FVB/N-3</strain>
        <tissue>Mammary gland</tissue>
    </source>
</reference>
<reference key="4">
    <citation type="journal article" date="2011" name="J. Mol. Cell. Cardiol.">
        <title>Zinc-finger protein 90 negatively regulates neuron-restrictive silencer factor-mediated transcriptional repression of fetal cardiac genes.</title>
        <authorList>
            <person name="Hata L."/>
            <person name="Murakami M."/>
            <person name="Kuwahara K."/>
            <person name="Nakagawa Y."/>
            <person name="Kinoshita H."/>
            <person name="Usami S."/>
            <person name="Yasuno S."/>
            <person name="Fujiwara M."/>
            <person name="Kuwabara Y."/>
            <person name="Minami T."/>
            <person name="Yamada Y."/>
            <person name="Yamada C."/>
            <person name="Nakao K."/>
            <person name="Ueshima K."/>
            <person name="Nishikimi T."/>
            <person name="Nakao K."/>
        </authorList>
    </citation>
    <scope>FUNCTION</scope>
    <scope>INTERACTION WITH REST</scope>
    <scope>SUBCELLULAR LOCATION</scope>
    <scope>TISSUE SPECIFICITY</scope>
</reference>
<protein>
    <recommendedName>
        <fullName>Zinc finger protein 90</fullName>
        <shortName>Zfp-90</shortName>
    </recommendedName>
    <alternativeName>
        <fullName>Zinc finger protein NK10</fullName>
    </alternativeName>
</protein>
<keyword id="KW-0238">DNA-binding</keyword>
<keyword id="KW-1017">Isopeptide bond</keyword>
<keyword id="KW-0479">Metal-binding</keyword>
<keyword id="KW-0539">Nucleus</keyword>
<keyword id="KW-1185">Reference proteome</keyword>
<keyword id="KW-0677">Repeat</keyword>
<keyword id="KW-0678">Repressor</keyword>
<keyword id="KW-0804">Transcription</keyword>
<keyword id="KW-0805">Transcription regulation</keyword>
<keyword id="KW-0832">Ubl conjugation</keyword>
<keyword id="KW-0862">Zinc</keyword>
<keyword id="KW-0863">Zinc-finger</keyword>
<dbReference type="EMBL" id="X79828">
    <property type="protein sequence ID" value="CAA56225.1"/>
    <property type="molecule type" value="mRNA"/>
</dbReference>
<dbReference type="EMBL" id="AK032286">
    <property type="protein sequence ID" value="BAC27794.1"/>
    <property type="molecule type" value="mRNA"/>
</dbReference>
<dbReference type="EMBL" id="AK050519">
    <property type="protein sequence ID" value="BAC34302.1"/>
    <property type="molecule type" value="mRNA"/>
</dbReference>
<dbReference type="EMBL" id="AK154205">
    <property type="protein sequence ID" value="BAE32436.1"/>
    <property type="status" value="ALT_SEQ"/>
    <property type="molecule type" value="mRNA"/>
</dbReference>
<dbReference type="EMBL" id="BC046298">
    <property type="protein sequence ID" value="AAH46298.1"/>
    <property type="molecule type" value="mRNA"/>
</dbReference>
<dbReference type="CCDS" id="CCDS22635.1"/>
<dbReference type="PIR" id="I48689">
    <property type="entry name" value="I48689"/>
</dbReference>
<dbReference type="RefSeq" id="NP_035894.1">
    <property type="nucleotide sequence ID" value="NM_011764.4"/>
</dbReference>
<dbReference type="SMR" id="Q61967"/>
<dbReference type="FunCoup" id="Q61967">
    <property type="interactions" value="58"/>
</dbReference>
<dbReference type="STRING" id="10090.ENSMUSP00000034382"/>
<dbReference type="iPTMnet" id="Q61967"/>
<dbReference type="PhosphoSitePlus" id="Q61967"/>
<dbReference type="jPOST" id="Q61967"/>
<dbReference type="PaxDb" id="10090-ENSMUSP00000034382"/>
<dbReference type="ProteomicsDB" id="299550"/>
<dbReference type="Pumba" id="Q61967"/>
<dbReference type="Antibodypedia" id="29788">
    <property type="antibodies" value="80 antibodies from 19 providers"/>
</dbReference>
<dbReference type="DNASU" id="22751"/>
<dbReference type="Ensembl" id="ENSMUST00000034382.8">
    <property type="protein sequence ID" value="ENSMUSP00000034382.8"/>
    <property type="gene ID" value="ENSMUSG00000031907.10"/>
</dbReference>
<dbReference type="Ensembl" id="ENSMUST00000212874.2">
    <property type="protein sequence ID" value="ENSMUSP00000148744.2"/>
    <property type="gene ID" value="ENSMUSG00000031907.10"/>
</dbReference>
<dbReference type="GeneID" id="22751"/>
<dbReference type="KEGG" id="mmu:22751"/>
<dbReference type="UCSC" id="uc009ngd.1">
    <property type="organism name" value="mouse"/>
</dbReference>
<dbReference type="AGR" id="MGI:104786"/>
<dbReference type="CTD" id="146198"/>
<dbReference type="MGI" id="MGI:104786">
    <property type="gene designation" value="Zfp90"/>
</dbReference>
<dbReference type="VEuPathDB" id="HostDB:ENSMUSG00000031907"/>
<dbReference type="eggNOG" id="KOG1721">
    <property type="taxonomic scope" value="Eukaryota"/>
</dbReference>
<dbReference type="GeneTree" id="ENSGT00940000162132"/>
<dbReference type="HOGENOM" id="CLU_002678_44_5_1"/>
<dbReference type="InParanoid" id="Q61967"/>
<dbReference type="OMA" id="TLEDTWD"/>
<dbReference type="OrthoDB" id="8117402at2759"/>
<dbReference type="PhylomeDB" id="Q61967"/>
<dbReference type="TreeFam" id="TF350822"/>
<dbReference type="Reactome" id="R-MMU-212436">
    <property type="pathway name" value="Generic Transcription Pathway"/>
</dbReference>
<dbReference type="BioGRID-ORCS" id="22751">
    <property type="hits" value="2 hits in 77 CRISPR screens"/>
</dbReference>
<dbReference type="ChiTaRS" id="Zfp90">
    <property type="organism name" value="mouse"/>
</dbReference>
<dbReference type="PRO" id="PR:Q61967"/>
<dbReference type="Proteomes" id="UP000000589">
    <property type="component" value="Chromosome 8"/>
</dbReference>
<dbReference type="RNAct" id="Q61967">
    <property type="molecule type" value="protein"/>
</dbReference>
<dbReference type="Bgee" id="ENSMUSG00000031907">
    <property type="expression patterns" value="Expressed in ganglionic eminence and 235 other cell types or tissues"/>
</dbReference>
<dbReference type="ExpressionAtlas" id="Q61967">
    <property type="expression patterns" value="baseline and differential"/>
</dbReference>
<dbReference type="GO" id="GO:0005634">
    <property type="term" value="C:nucleus"/>
    <property type="evidence" value="ECO:0000314"/>
    <property type="project" value="UniProtKB"/>
</dbReference>
<dbReference type="GO" id="GO:0003677">
    <property type="term" value="F:DNA binding"/>
    <property type="evidence" value="ECO:0000314"/>
    <property type="project" value="MGI"/>
</dbReference>
<dbReference type="GO" id="GO:0001227">
    <property type="term" value="F:DNA-binding transcription repressor activity, RNA polymerase II-specific"/>
    <property type="evidence" value="ECO:0000314"/>
    <property type="project" value="UniProtKB"/>
</dbReference>
<dbReference type="GO" id="GO:0008270">
    <property type="term" value="F:zinc ion binding"/>
    <property type="evidence" value="ECO:0007669"/>
    <property type="project" value="UniProtKB-KW"/>
</dbReference>
<dbReference type="GO" id="GO:0043392">
    <property type="term" value="P:negative regulation of DNA binding"/>
    <property type="evidence" value="ECO:0000314"/>
    <property type="project" value="UniProtKB"/>
</dbReference>
<dbReference type="GO" id="GO:0045892">
    <property type="term" value="P:negative regulation of DNA-templated transcription"/>
    <property type="evidence" value="ECO:0000314"/>
    <property type="project" value="UniProtKB"/>
</dbReference>
<dbReference type="GO" id="GO:0000122">
    <property type="term" value="P:negative regulation of transcription by RNA polymerase II"/>
    <property type="evidence" value="ECO:0000314"/>
    <property type="project" value="MGI"/>
</dbReference>
<dbReference type="GO" id="GO:0045893">
    <property type="term" value="P:positive regulation of DNA-templated transcription"/>
    <property type="evidence" value="ECO:0000315"/>
    <property type="project" value="UniProtKB"/>
</dbReference>
<dbReference type="CDD" id="cd07765">
    <property type="entry name" value="KRAB_A-box"/>
    <property type="match status" value="1"/>
</dbReference>
<dbReference type="FunFam" id="3.30.160.60:FF:004690">
    <property type="match status" value="1"/>
</dbReference>
<dbReference type="FunFam" id="3.30.160.60:FF:004691">
    <property type="match status" value="1"/>
</dbReference>
<dbReference type="FunFam" id="3.30.160.60:FF:000557">
    <property type="entry name" value="zinc finger and SCAN domain-containing protein 29"/>
    <property type="match status" value="1"/>
</dbReference>
<dbReference type="FunFam" id="3.30.160.60:FF:002343">
    <property type="entry name" value="Zinc finger protein 33A"/>
    <property type="match status" value="1"/>
</dbReference>
<dbReference type="FunFam" id="3.30.160.60:FF:000338">
    <property type="entry name" value="zinc finger protein 383"/>
    <property type="match status" value="1"/>
</dbReference>
<dbReference type="FunFam" id="3.30.160.60:FF:002254">
    <property type="entry name" value="Zinc finger protein 540"/>
    <property type="match status" value="1"/>
</dbReference>
<dbReference type="FunFam" id="3.30.160.60:FF:001157">
    <property type="entry name" value="Zinc finger protein 793"/>
    <property type="match status" value="1"/>
</dbReference>
<dbReference type="FunFam" id="3.30.160.60:FF:000485">
    <property type="entry name" value="Zinc finger protein 90 homolog"/>
    <property type="match status" value="1"/>
</dbReference>
<dbReference type="FunFam" id="3.30.160.60:FF:000568">
    <property type="entry name" value="zinc finger protein 90 homolog"/>
    <property type="match status" value="2"/>
</dbReference>
<dbReference type="FunFam" id="3.30.160.60:FF:000934">
    <property type="entry name" value="zinc finger protein 90 homolog"/>
    <property type="match status" value="2"/>
</dbReference>
<dbReference type="FunFam" id="3.30.160.60:FF:001521">
    <property type="entry name" value="zinc finger protein 90 homolog"/>
    <property type="match status" value="1"/>
</dbReference>
<dbReference type="Gene3D" id="6.10.140.140">
    <property type="match status" value="1"/>
</dbReference>
<dbReference type="Gene3D" id="3.30.160.60">
    <property type="entry name" value="Classic Zinc Finger"/>
    <property type="match status" value="13"/>
</dbReference>
<dbReference type="InterPro" id="IPR001909">
    <property type="entry name" value="KRAB"/>
</dbReference>
<dbReference type="InterPro" id="IPR036051">
    <property type="entry name" value="KRAB_dom_sf"/>
</dbReference>
<dbReference type="InterPro" id="IPR036236">
    <property type="entry name" value="Znf_C2H2_sf"/>
</dbReference>
<dbReference type="InterPro" id="IPR013087">
    <property type="entry name" value="Znf_C2H2_type"/>
</dbReference>
<dbReference type="PANTHER" id="PTHR24399:SF75">
    <property type="entry name" value="ZFP14 ZINC FINGER PROTEIN-RELATED"/>
    <property type="match status" value="1"/>
</dbReference>
<dbReference type="PANTHER" id="PTHR24399">
    <property type="entry name" value="ZINC FINGER AND BTB DOMAIN-CONTAINING"/>
    <property type="match status" value="1"/>
</dbReference>
<dbReference type="Pfam" id="PF01352">
    <property type="entry name" value="KRAB"/>
    <property type="match status" value="1"/>
</dbReference>
<dbReference type="Pfam" id="PF00096">
    <property type="entry name" value="zf-C2H2"/>
    <property type="match status" value="11"/>
</dbReference>
<dbReference type="SMART" id="SM00349">
    <property type="entry name" value="KRAB"/>
    <property type="match status" value="1"/>
</dbReference>
<dbReference type="SMART" id="SM00355">
    <property type="entry name" value="ZnF_C2H2"/>
    <property type="match status" value="13"/>
</dbReference>
<dbReference type="SUPFAM" id="SSF57667">
    <property type="entry name" value="beta-beta-alpha zinc fingers"/>
    <property type="match status" value="8"/>
</dbReference>
<dbReference type="SUPFAM" id="SSF109640">
    <property type="entry name" value="KRAB domain (Kruppel-associated box)"/>
    <property type="match status" value="1"/>
</dbReference>
<dbReference type="PROSITE" id="PS50805">
    <property type="entry name" value="KRAB"/>
    <property type="match status" value="1"/>
</dbReference>
<dbReference type="PROSITE" id="PS00028">
    <property type="entry name" value="ZINC_FINGER_C2H2_1"/>
    <property type="match status" value="13"/>
</dbReference>
<dbReference type="PROSITE" id="PS50157">
    <property type="entry name" value="ZINC_FINGER_C2H2_2"/>
    <property type="match status" value="13"/>
</dbReference>
<evidence type="ECO:0000250" key="1">
    <source>
        <dbReference type="UniProtKB" id="Q8TF47"/>
    </source>
</evidence>
<evidence type="ECO:0000255" key="2">
    <source>
        <dbReference type="PROSITE-ProRule" id="PRU00042"/>
    </source>
</evidence>
<evidence type="ECO:0000255" key="3">
    <source>
        <dbReference type="PROSITE-ProRule" id="PRU00119"/>
    </source>
</evidence>
<evidence type="ECO:0000256" key="4">
    <source>
        <dbReference type="SAM" id="MobiDB-lite"/>
    </source>
</evidence>
<evidence type="ECO:0000269" key="5">
    <source>
    </source>
</evidence>
<evidence type="ECO:0000269" key="6">
    <source>
    </source>
</evidence>
<evidence type="ECO:0000305" key="7"/>
<name>ZFP90_MOUSE</name>
<gene>
    <name type="primary">Zfp90</name>
    <name type="synonym">Nk10</name>
</gene>
<comment type="function">
    <text evidence="5 6">Inhibits the transcriptional repressor activity of REST by inhibiting its binding to DNA, thereby derepressing transcription of REST target genes.</text>
</comment>
<comment type="subunit">
    <text evidence="5">Interacts (via N- and C-termini) with REST (via zinc-finger DNA-binding domain); the interaction inhibits REST repressor activity.</text>
</comment>
<comment type="subcellular location">
    <subcellularLocation>
        <location evidence="5 6">Nucleus</location>
    </subcellularLocation>
    <text evidence="5">Colocalizes with REST in the nucleus.</text>
</comment>
<comment type="tissue specificity">
    <text evidence="5 6">Brain, spleen, thymus, and testis (PubMed:7576184). Expressed in heart (PubMed:21284946, PubMed:7576184).</text>
</comment>
<comment type="developmental stage">
    <text evidence="6">There is a marked increase after postnatal stages 18-20 (simultaneously to the appearance of haploid cell stages). Maximal expression is observed around 2 weeks postnatally, with the exception of brain and testis, where the expression is highest in earlier developmental stages.</text>
</comment>
<comment type="similarity">
    <text evidence="7">Belongs to the krueppel C2H2-type zinc-finger protein family.</text>
</comment>
<comment type="sequence caution" evidence="7">
    <conflict type="frameshift">
        <sequence resource="EMBL-CDS" id="BAE32436"/>
    </conflict>
</comment>
<comment type="sequence caution" evidence="7">
    <conflict type="miscellaneous discrepancy">
        <sequence resource="EMBL-CDS" id="BAE32436"/>
    </conflict>
    <text>After frameshift's correction, the CDS was not identified.</text>
</comment>
<organism>
    <name type="scientific">Mus musculus</name>
    <name type="common">Mouse</name>
    <dbReference type="NCBI Taxonomy" id="10090"/>
    <lineage>
        <taxon>Eukaryota</taxon>
        <taxon>Metazoa</taxon>
        <taxon>Chordata</taxon>
        <taxon>Craniata</taxon>
        <taxon>Vertebrata</taxon>
        <taxon>Euteleostomi</taxon>
        <taxon>Mammalia</taxon>
        <taxon>Eutheria</taxon>
        <taxon>Euarchontoglires</taxon>
        <taxon>Glires</taxon>
        <taxon>Rodentia</taxon>
        <taxon>Myomorpha</taxon>
        <taxon>Muroidea</taxon>
        <taxon>Muridae</taxon>
        <taxon>Murinae</taxon>
        <taxon>Mus</taxon>
        <taxon>Mus</taxon>
    </lineage>
</organism>
<feature type="chain" id="PRO_0000047311" description="Zinc finger protein 90">
    <location>
        <begin position="1"/>
        <end position="636"/>
    </location>
</feature>
<feature type="domain" description="KRAB" evidence="3">
    <location>
        <begin position="14"/>
        <end position="85"/>
    </location>
</feature>
<feature type="zinc finger region" description="C2H2-type 1" evidence="2">
    <location>
        <begin position="208"/>
        <end position="230"/>
    </location>
</feature>
<feature type="zinc finger region" description="C2H2-type 2" evidence="2">
    <location>
        <begin position="250"/>
        <end position="272"/>
    </location>
</feature>
<feature type="zinc finger region" description="C2H2-type 3" evidence="2">
    <location>
        <begin position="278"/>
        <end position="300"/>
    </location>
</feature>
<feature type="zinc finger region" description="C2H2-type 4" evidence="2">
    <location>
        <begin position="306"/>
        <end position="328"/>
    </location>
</feature>
<feature type="zinc finger region" description="C2H2-type 5" evidence="2">
    <location>
        <begin position="334"/>
        <end position="356"/>
    </location>
</feature>
<feature type="zinc finger region" description="C2H2-type 6" evidence="2">
    <location>
        <begin position="362"/>
        <end position="384"/>
    </location>
</feature>
<feature type="zinc finger region" description="C2H2-type 7" evidence="2">
    <location>
        <begin position="390"/>
        <end position="412"/>
    </location>
</feature>
<feature type="zinc finger region" description="C2H2-type 8" evidence="2">
    <location>
        <begin position="446"/>
        <end position="468"/>
    </location>
</feature>
<feature type="zinc finger region" description="C2H2-type 9" evidence="2">
    <location>
        <begin position="494"/>
        <end position="516"/>
    </location>
</feature>
<feature type="zinc finger region" description="C2H2-type 10" evidence="2">
    <location>
        <begin position="522"/>
        <end position="544"/>
    </location>
</feature>
<feature type="zinc finger region" description="C2H2-type 11" evidence="2">
    <location>
        <begin position="550"/>
        <end position="572"/>
    </location>
</feature>
<feature type="zinc finger region" description="C2H2-type 12" evidence="2">
    <location>
        <begin position="578"/>
        <end position="600"/>
    </location>
</feature>
<feature type="zinc finger region" description="C2H2-type 13" evidence="2">
    <location>
        <begin position="606"/>
        <end position="628"/>
    </location>
</feature>
<feature type="region of interest" description="Disordered" evidence="4">
    <location>
        <begin position="227"/>
        <end position="247"/>
    </location>
</feature>
<feature type="cross-link" description="Glycyl lysine isopeptide (Lys-Gly) (interchain with G-Cter in SUMO2)" evidence="1">
    <location>
        <position position="444"/>
    </location>
</feature>
<feature type="sequence conflict" description="In Ref. 2; BAE32436." evidence="7" ref="2">
    <original>L</original>
    <variation>A</variation>
    <location>
        <position position="53"/>
    </location>
</feature>
<feature type="sequence conflict" description="In Ref. 2; BAE32436." evidence="7" ref="2">
    <original>T</original>
    <variation>A</variation>
    <location>
        <position position="545"/>
    </location>
</feature>
<sequence length="636" mass="72423">MAPRPPTAKPQESVTFKDVAVNFTQEEWHHVGPAQRSLYRDVMLENYNHLVSLGYQVSKPEVIFKLEQGEEPWISEKEIQRPFCPDWKTRPESSRSPQQGVSEVFLRTNVLSHTTIGDIWNVAIQGHQESGRRHLGPEASSQKKITTLEKKIEQNKVGEDSSLSTDLVPQLDISSSIRPSDCKTFGNNLEHNSELVTQSNILAKKKPYKCDKCRKSFIHRSSLNKHEKIHKGDPYSNGTDQGAQSGRKHHECADCGKTFLWRTQLTEHQRIHTGEKPFECNVCGKAFRHSSSLGQHENAHTGEKPYQCSLCGKAFQRSSSLVQHQRIHTGEKPYRCNLCGRSFRHSTSLTQHEVTHSGEKPFQCKECGKAFSRCSSLVQHERTHTGEKPFECSICGRAFGQSPSLYKHMRIHKRSKPYQSNNFSLAFVPNTPLPQGEGLLTEVKSYHCNDCGKDFGHITDFSEHQRLHAGENSYGSEQTLLGQQSLSHPREKPYQCNVCGKAFKRSTSFIEHHRIHTGEKPYECNECGEAFSRLSSLTQHERTHTGEKPYECIDCGKAFSQSSSLIQHERTHTGEKPYECNECGRAFRKKTNLHDHQRTHTGEKPYACKECGRNFSRSSALTKHHRVHARNKLQES</sequence>